<sequence length="92" mass="10472">MPRSLKKGPFIDLHLLKKVEKAMEAGDKKPIKTWSRRSMIIPNMIGLTIAVHNGRQHVPVFVTDEMIGHKLGEFSPTRTYRGHAADKKAKKR</sequence>
<protein>
    <recommendedName>
        <fullName evidence="1">Small ribosomal subunit protein uS19</fullName>
    </recommendedName>
    <alternativeName>
        <fullName evidence="2">30S ribosomal protein S19</fullName>
    </alternativeName>
</protein>
<organism>
    <name type="scientific">Shewanella sp. (strain MR-7)</name>
    <dbReference type="NCBI Taxonomy" id="60481"/>
    <lineage>
        <taxon>Bacteria</taxon>
        <taxon>Pseudomonadati</taxon>
        <taxon>Pseudomonadota</taxon>
        <taxon>Gammaproteobacteria</taxon>
        <taxon>Alteromonadales</taxon>
        <taxon>Shewanellaceae</taxon>
        <taxon>Shewanella</taxon>
    </lineage>
</organism>
<evidence type="ECO:0000255" key="1">
    <source>
        <dbReference type="HAMAP-Rule" id="MF_00531"/>
    </source>
</evidence>
<evidence type="ECO:0000305" key="2"/>
<gene>
    <name evidence="1" type="primary">rpsS</name>
    <name type="ordered locus">Shewmr7_0198</name>
</gene>
<accession>Q0I0A1</accession>
<dbReference type="EMBL" id="CP000444">
    <property type="protein sequence ID" value="ABI41204.1"/>
    <property type="molecule type" value="Genomic_DNA"/>
</dbReference>
<dbReference type="SMR" id="Q0I0A1"/>
<dbReference type="KEGG" id="shm:Shewmr7_0198"/>
<dbReference type="HOGENOM" id="CLU_144911_0_1_6"/>
<dbReference type="GO" id="GO:0005737">
    <property type="term" value="C:cytoplasm"/>
    <property type="evidence" value="ECO:0007669"/>
    <property type="project" value="UniProtKB-ARBA"/>
</dbReference>
<dbReference type="GO" id="GO:0015935">
    <property type="term" value="C:small ribosomal subunit"/>
    <property type="evidence" value="ECO:0007669"/>
    <property type="project" value="InterPro"/>
</dbReference>
<dbReference type="GO" id="GO:0019843">
    <property type="term" value="F:rRNA binding"/>
    <property type="evidence" value="ECO:0007669"/>
    <property type="project" value="UniProtKB-UniRule"/>
</dbReference>
<dbReference type="GO" id="GO:0003735">
    <property type="term" value="F:structural constituent of ribosome"/>
    <property type="evidence" value="ECO:0007669"/>
    <property type="project" value="InterPro"/>
</dbReference>
<dbReference type="GO" id="GO:0000028">
    <property type="term" value="P:ribosomal small subunit assembly"/>
    <property type="evidence" value="ECO:0007669"/>
    <property type="project" value="TreeGrafter"/>
</dbReference>
<dbReference type="GO" id="GO:0006412">
    <property type="term" value="P:translation"/>
    <property type="evidence" value="ECO:0007669"/>
    <property type="project" value="UniProtKB-UniRule"/>
</dbReference>
<dbReference type="FunFam" id="3.30.860.10:FF:000001">
    <property type="entry name" value="30S ribosomal protein S19"/>
    <property type="match status" value="1"/>
</dbReference>
<dbReference type="Gene3D" id="3.30.860.10">
    <property type="entry name" value="30s Ribosomal Protein S19, Chain A"/>
    <property type="match status" value="1"/>
</dbReference>
<dbReference type="HAMAP" id="MF_00531">
    <property type="entry name" value="Ribosomal_uS19"/>
    <property type="match status" value="1"/>
</dbReference>
<dbReference type="InterPro" id="IPR002222">
    <property type="entry name" value="Ribosomal_uS19"/>
</dbReference>
<dbReference type="InterPro" id="IPR005732">
    <property type="entry name" value="Ribosomal_uS19_bac-type"/>
</dbReference>
<dbReference type="InterPro" id="IPR020934">
    <property type="entry name" value="Ribosomal_uS19_CS"/>
</dbReference>
<dbReference type="InterPro" id="IPR023575">
    <property type="entry name" value="Ribosomal_uS19_SF"/>
</dbReference>
<dbReference type="NCBIfam" id="TIGR01050">
    <property type="entry name" value="rpsS_bact"/>
    <property type="match status" value="1"/>
</dbReference>
<dbReference type="PANTHER" id="PTHR11880">
    <property type="entry name" value="RIBOSOMAL PROTEIN S19P FAMILY MEMBER"/>
    <property type="match status" value="1"/>
</dbReference>
<dbReference type="PANTHER" id="PTHR11880:SF8">
    <property type="entry name" value="SMALL RIBOSOMAL SUBUNIT PROTEIN US19M"/>
    <property type="match status" value="1"/>
</dbReference>
<dbReference type="Pfam" id="PF00203">
    <property type="entry name" value="Ribosomal_S19"/>
    <property type="match status" value="1"/>
</dbReference>
<dbReference type="PIRSF" id="PIRSF002144">
    <property type="entry name" value="Ribosomal_S19"/>
    <property type="match status" value="1"/>
</dbReference>
<dbReference type="PRINTS" id="PR00975">
    <property type="entry name" value="RIBOSOMALS19"/>
</dbReference>
<dbReference type="SUPFAM" id="SSF54570">
    <property type="entry name" value="Ribosomal protein S19"/>
    <property type="match status" value="1"/>
</dbReference>
<dbReference type="PROSITE" id="PS00323">
    <property type="entry name" value="RIBOSOMAL_S19"/>
    <property type="match status" value="1"/>
</dbReference>
<feature type="chain" id="PRO_0000265430" description="Small ribosomal subunit protein uS19">
    <location>
        <begin position="1"/>
        <end position="92"/>
    </location>
</feature>
<proteinExistence type="inferred from homology"/>
<keyword id="KW-0687">Ribonucleoprotein</keyword>
<keyword id="KW-0689">Ribosomal protein</keyword>
<keyword id="KW-0694">RNA-binding</keyword>
<keyword id="KW-0699">rRNA-binding</keyword>
<name>RS19_SHESR</name>
<reference key="1">
    <citation type="submission" date="2006-08" db="EMBL/GenBank/DDBJ databases">
        <title>Complete sequence of chromosome 1 of Shewanella sp. MR-7.</title>
        <authorList>
            <person name="Copeland A."/>
            <person name="Lucas S."/>
            <person name="Lapidus A."/>
            <person name="Barry K."/>
            <person name="Detter J.C."/>
            <person name="Glavina del Rio T."/>
            <person name="Hammon N."/>
            <person name="Israni S."/>
            <person name="Dalin E."/>
            <person name="Tice H."/>
            <person name="Pitluck S."/>
            <person name="Kiss H."/>
            <person name="Brettin T."/>
            <person name="Bruce D."/>
            <person name="Han C."/>
            <person name="Tapia R."/>
            <person name="Gilna P."/>
            <person name="Schmutz J."/>
            <person name="Larimer F."/>
            <person name="Land M."/>
            <person name="Hauser L."/>
            <person name="Kyrpides N."/>
            <person name="Mikhailova N."/>
            <person name="Nealson K."/>
            <person name="Konstantinidis K."/>
            <person name="Klappenbach J."/>
            <person name="Tiedje J."/>
            <person name="Richardson P."/>
        </authorList>
    </citation>
    <scope>NUCLEOTIDE SEQUENCE [LARGE SCALE GENOMIC DNA]</scope>
    <source>
        <strain>MR-7</strain>
    </source>
</reference>
<comment type="function">
    <text evidence="1">Protein S19 forms a complex with S13 that binds strongly to the 16S ribosomal RNA.</text>
</comment>
<comment type="similarity">
    <text evidence="1">Belongs to the universal ribosomal protein uS19 family.</text>
</comment>